<gene>
    <name evidence="1" type="primary">ttcA</name>
    <name type="ordered locus">EC55989_1510</name>
</gene>
<sequence length="311" mass="35488">MSQNQEISKKEQYNLNKLQKRLRRNVGEAIADFNMIEEGDRIMVCLSGGKDSYTMLEILRNLQQSAPINFSLVAVNLDQKQPGFPEHVLPEYLEKLGVEYKIVEENTYGIVKEKIPEGKTTCSLCSRLRRGILYRTATELGATKIALGHHRDDILQTLFLNMFYGGKMKGMPPKLMSDDGKHIVIRPLAYCREKDIQRFADAKAFPIIPCNLCGSQPNLQRQVIADMLRDWDKRYPGRIETMFSAMQNVVPSHLCDTNLFDFKGITHGSEVVNGGDLAFDREEIPLQPVGWQPEEDENQLDELRLNVVEVK</sequence>
<evidence type="ECO:0000255" key="1">
    <source>
        <dbReference type="HAMAP-Rule" id="MF_01850"/>
    </source>
</evidence>
<dbReference type="EC" id="2.8.1.-" evidence="1"/>
<dbReference type="EMBL" id="CU928145">
    <property type="protein sequence ID" value="CAU97367.1"/>
    <property type="molecule type" value="Genomic_DNA"/>
</dbReference>
<dbReference type="RefSeq" id="WP_000081419.1">
    <property type="nucleotide sequence ID" value="NC_011748.1"/>
</dbReference>
<dbReference type="SMR" id="B7L5B2"/>
<dbReference type="KEGG" id="eck:EC55989_1510"/>
<dbReference type="HOGENOM" id="CLU_026481_0_0_6"/>
<dbReference type="Proteomes" id="UP000000746">
    <property type="component" value="Chromosome"/>
</dbReference>
<dbReference type="GO" id="GO:0005737">
    <property type="term" value="C:cytoplasm"/>
    <property type="evidence" value="ECO:0007669"/>
    <property type="project" value="UniProtKB-SubCell"/>
</dbReference>
<dbReference type="GO" id="GO:0051539">
    <property type="term" value="F:4 iron, 4 sulfur cluster binding"/>
    <property type="evidence" value="ECO:0007669"/>
    <property type="project" value="UniProtKB-UniRule"/>
</dbReference>
<dbReference type="GO" id="GO:0005524">
    <property type="term" value="F:ATP binding"/>
    <property type="evidence" value="ECO:0007669"/>
    <property type="project" value="UniProtKB-UniRule"/>
</dbReference>
<dbReference type="GO" id="GO:0000287">
    <property type="term" value="F:magnesium ion binding"/>
    <property type="evidence" value="ECO:0007669"/>
    <property type="project" value="UniProtKB-UniRule"/>
</dbReference>
<dbReference type="GO" id="GO:0016783">
    <property type="term" value="F:sulfurtransferase activity"/>
    <property type="evidence" value="ECO:0007669"/>
    <property type="project" value="UniProtKB-UniRule"/>
</dbReference>
<dbReference type="GO" id="GO:0000049">
    <property type="term" value="F:tRNA binding"/>
    <property type="evidence" value="ECO:0007669"/>
    <property type="project" value="UniProtKB-KW"/>
</dbReference>
<dbReference type="GO" id="GO:0034227">
    <property type="term" value="P:tRNA thio-modification"/>
    <property type="evidence" value="ECO:0007669"/>
    <property type="project" value="UniProtKB-UniRule"/>
</dbReference>
<dbReference type="CDD" id="cd24138">
    <property type="entry name" value="TtcA-like"/>
    <property type="match status" value="1"/>
</dbReference>
<dbReference type="FunFam" id="3.40.50.620:FF:000046">
    <property type="entry name" value="tRNA-cytidine(32) 2-sulfurtransferase"/>
    <property type="match status" value="1"/>
</dbReference>
<dbReference type="Gene3D" id="3.40.50.620">
    <property type="entry name" value="HUPs"/>
    <property type="match status" value="1"/>
</dbReference>
<dbReference type="HAMAP" id="MF_01850">
    <property type="entry name" value="TtcA"/>
    <property type="match status" value="1"/>
</dbReference>
<dbReference type="InterPro" id="IPR014729">
    <property type="entry name" value="Rossmann-like_a/b/a_fold"/>
</dbReference>
<dbReference type="InterPro" id="IPR011063">
    <property type="entry name" value="TilS/TtcA_N"/>
</dbReference>
<dbReference type="InterPro" id="IPR012089">
    <property type="entry name" value="tRNA_Cyd_32_2_STrfase"/>
</dbReference>
<dbReference type="InterPro" id="IPR035107">
    <property type="entry name" value="tRNA_thiolation_TtcA_Ctu1"/>
</dbReference>
<dbReference type="NCBIfam" id="NF007972">
    <property type="entry name" value="PRK10696.1"/>
    <property type="match status" value="1"/>
</dbReference>
<dbReference type="PANTHER" id="PTHR43686:SF1">
    <property type="entry name" value="AMINOTRAN_5 DOMAIN-CONTAINING PROTEIN"/>
    <property type="match status" value="1"/>
</dbReference>
<dbReference type="PANTHER" id="PTHR43686">
    <property type="entry name" value="SULFURTRANSFERASE-RELATED"/>
    <property type="match status" value="1"/>
</dbReference>
<dbReference type="Pfam" id="PF01171">
    <property type="entry name" value="ATP_bind_3"/>
    <property type="match status" value="1"/>
</dbReference>
<dbReference type="PIRSF" id="PIRSF004976">
    <property type="entry name" value="ATPase_YdaO"/>
    <property type="match status" value="1"/>
</dbReference>
<dbReference type="SUPFAM" id="SSF52402">
    <property type="entry name" value="Adenine nucleotide alpha hydrolases-like"/>
    <property type="match status" value="1"/>
</dbReference>
<keyword id="KW-0004">4Fe-4S</keyword>
<keyword id="KW-0067">ATP-binding</keyword>
<keyword id="KW-0963">Cytoplasm</keyword>
<keyword id="KW-0408">Iron</keyword>
<keyword id="KW-0411">Iron-sulfur</keyword>
<keyword id="KW-0460">Magnesium</keyword>
<keyword id="KW-0479">Metal-binding</keyword>
<keyword id="KW-0547">Nucleotide-binding</keyword>
<keyword id="KW-1185">Reference proteome</keyword>
<keyword id="KW-0694">RNA-binding</keyword>
<keyword id="KW-0808">Transferase</keyword>
<keyword id="KW-0819">tRNA processing</keyword>
<keyword id="KW-0820">tRNA-binding</keyword>
<proteinExistence type="inferred from homology"/>
<accession>B7L5B2</accession>
<comment type="function">
    <text evidence="1">Catalyzes the ATP-dependent 2-thiolation of cytidine in position 32 of tRNA, to form 2-thiocytidine (s(2)C32). The sulfur atoms are provided by the cysteine/cysteine desulfurase (IscS) system.</text>
</comment>
<comment type="catalytic activity">
    <reaction evidence="1">
        <text>cytidine(32) in tRNA + S-sulfanyl-L-cysteinyl-[cysteine desulfurase] + AH2 + ATP = 2-thiocytidine(32) in tRNA + L-cysteinyl-[cysteine desulfurase] + A + AMP + diphosphate + H(+)</text>
        <dbReference type="Rhea" id="RHEA:57048"/>
        <dbReference type="Rhea" id="RHEA-COMP:10288"/>
        <dbReference type="Rhea" id="RHEA-COMP:12157"/>
        <dbReference type="Rhea" id="RHEA-COMP:12158"/>
        <dbReference type="Rhea" id="RHEA-COMP:14821"/>
        <dbReference type="ChEBI" id="CHEBI:13193"/>
        <dbReference type="ChEBI" id="CHEBI:15378"/>
        <dbReference type="ChEBI" id="CHEBI:17499"/>
        <dbReference type="ChEBI" id="CHEBI:29950"/>
        <dbReference type="ChEBI" id="CHEBI:30616"/>
        <dbReference type="ChEBI" id="CHEBI:33019"/>
        <dbReference type="ChEBI" id="CHEBI:61963"/>
        <dbReference type="ChEBI" id="CHEBI:82748"/>
        <dbReference type="ChEBI" id="CHEBI:141453"/>
        <dbReference type="ChEBI" id="CHEBI:456215"/>
    </reaction>
    <physiologicalReaction direction="left-to-right" evidence="1">
        <dbReference type="Rhea" id="RHEA:57049"/>
    </physiologicalReaction>
</comment>
<comment type="cofactor">
    <cofactor evidence="1">
        <name>Mg(2+)</name>
        <dbReference type="ChEBI" id="CHEBI:18420"/>
    </cofactor>
</comment>
<comment type="cofactor">
    <cofactor evidence="1">
        <name>[4Fe-4S] cluster</name>
        <dbReference type="ChEBI" id="CHEBI:49883"/>
    </cofactor>
    <text evidence="1">Binds 1 [4Fe-4S] cluster per subunit. The cluster is chelated by three Cys residues, the fourth Fe has a free coordination site that may bind a sulfur atom transferred from the persulfide of IscS.</text>
</comment>
<comment type="pathway">
    <text evidence="1">tRNA modification.</text>
</comment>
<comment type="subunit">
    <text evidence="1">Homodimer.</text>
</comment>
<comment type="subcellular location">
    <subcellularLocation>
        <location evidence="1">Cytoplasm</location>
    </subcellularLocation>
</comment>
<comment type="miscellaneous">
    <text evidence="1">The thiolation reaction likely consists of two steps: a first activation step by ATP to form an adenylated intermediate of the target base of tRNA, and a second nucleophilic substitution step of the sulfur (S) atom supplied by the hydrosulfide attached to the Fe-S cluster.</text>
</comment>
<comment type="similarity">
    <text evidence="1">Belongs to the TtcA family.</text>
</comment>
<name>TTCA_ECO55</name>
<organism>
    <name type="scientific">Escherichia coli (strain 55989 / EAEC)</name>
    <dbReference type="NCBI Taxonomy" id="585055"/>
    <lineage>
        <taxon>Bacteria</taxon>
        <taxon>Pseudomonadati</taxon>
        <taxon>Pseudomonadota</taxon>
        <taxon>Gammaproteobacteria</taxon>
        <taxon>Enterobacterales</taxon>
        <taxon>Enterobacteriaceae</taxon>
        <taxon>Escherichia</taxon>
    </lineage>
</organism>
<feature type="chain" id="PRO_1000188635" description="tRNA-cytidine(32) 2-sulfurtransferase">
    <location>
        <begin position="1"/>
        <end position="311"/>
    </location>
</feature>
<feature type="short sequence motif" description="PP-loop motif" evidence="1">
    <location>
        <begin position="47"/>
        <end position="52"/>
    </location>
</feature>
<feature type="binding site" evidence="1">
    <location>
        <position position="122"/>
    </location>
    <ligand>
        <name>[4Fe-4S] cluster</name>
        <dbReference type="ChEBI" id="CHEBI:49883"/>
    </ligand>
</feature>
<feature type="binding site" evidence="1">
    <location>
        <position position="125"/>
    </location>
    <ligand>
        <name>[4Fe-4S] cluster</name>
        <dbReference type="ChEBI" id="CHEBI:49883"/>
    </ligand>
</feature>
<feature type="binding site" evidence="1">
    <location>
        <position position="213"/>
    </location>
    <ligand>
        <name>[4Fe-4S] cluster</name>
        <dbReference type="ChEBI" id="CHEBI:49883"/>
    </ligand>
</feature>
<reference key="1">
    <citation type="journal article" date="2009" name="PLoS Genet.">
        <title>Organised genome dynamics in the Escherichia coli species results in highly diverse adaptive paths.</title>
        <authorList>
            <person name="Touchon M."/>
            <person name="Hoede C."/>
            <person name="Tenaillon O."/>
            <person name="Barbe V."/>
            <person name="Baeriswyl S."/>
            <person name="Bidet P."/>
            <person name="Bingen E."/>
            <person name="Bonacorsi S."/>
            <person name="Bouchier C."/>
            <person name="Bouvet O."/>
            <person name="Calteau A."/>
            <person name="Chiapello H."/>
            <person name="Clermont O."/>
            <person name="Cruveiller S."/>
            <person name="Danchin A."/>
            <person name="Diard M."/>
            <person name="Dossat C."/>
            <person name="Karoui M.E."/>
            <person name="Frapy E."/>
            <person name="Garry L."/>
            <person name="Ghigo J.M."/>
            <person name="Gilles A.M."/>
            <person name="Johnson J."/>
            <person name="Le Bouguenec C."/>
            <person name="Lescat M."/>
            <person name="Mangenot S."/>
            <person name="Martinez-Jehanne V."/>
            <person name="Matic I."/>
            <person name="Nassif X."/>
            <person name="Oztas S."/>
            <person name="Petit M.A."/>
            <person name="Pichon C."/>
            <person name="Rouy Z."/>
            <person name="Ruf C.S."/>
            <person name="Schneider D."/>
            <person name="Tourret J."/>
            <person name="Vacherie B."/>
            <person name="Vallenet D."/>
            <person name="Medigue C."/>
            <person name="Rocha E.P.C."/>
            <person name="Denamur E."/>
        </authorList>
    </citation>
    <scope>NUCLEOTIDE SEQUENCE [LARGE SCALE GENOMIC DNA]</scope>
    <source>
        <strain>55989 / EAEC</strain>
    </source>
</reference>
<protein>
    <recommendedName>
        <fullName evidence="1">tRNA-cytidine(32) 2-sulfurtransferase</fullName>
        <ecNumber evidence="1">2.8.1.-</ecNumber>
    </recommendedName>
    <alternativeName>
        <fullName evidence="1">Two-thiocytidine biosynthesis protein A</fullName>
    </alternativeName>
    <alternativeName>
        <fullName evidence="1">tRNA 2-thiocytidine biosynthesis protein TtcA</fullName>
    </alternativeName>
</protein>